<dbReference type="EC" id="2.1.1.-" evidence="1"/>
<dbReference type="EMBL" id="AAHF01000002">
    <property type="protein sequence ID" value="EAL92176.1"/>
    <property type="molecule type" value="Genomic_DNA"/>
</dbReference>
<dbReference type="RefSeq" id="XP_754214.1">
    <property type="nucleotide sequence ID" value="XM_749121.1"/>
</dbReference>
<dbReference type="SMR" id="Q4WYS7"/>
<dbReference type="FunCoup" id="Q4WYS7">
    <property type="interactions" value="135"/>
</dbReference>
<dbReference type="STRING" id="330879.Q4WYS7"/>
<dbReference type="EnsemblFungi" id="EAL92176">
    <property type="protein sequence ID" value="EAL92176"/>
    <property type="gene ID" value="AFUA_3G14110"/>
</dbReference>
<dbReference type="GeneID" id="3512117"/>
<dbReference type="KEGG" id="afm:AFUA_3G14110"/>
<dbReference type="VEuPathDB" id="FungiDB:Afu3g14110"/>
<dbReference type="eggNOG" id="KOG2920">
    <property type="taxonomic scope" value="Eukaryota"/>
</dbReference>
<dbReference type="HOGENOM" id="CLU_032409_0_0_1"/>
<dbReference type="InParanoid" id="Q4WYS7"/>
<dbReference type="OMA" id="VGHNPLW"/>
<dbReference type="OrthoDB" id="46564at2759"/>
<dbReference type="Proteomes" id="UP000002530">
    <property type="component" value="Chromosome 3"/>
</dbReference>
<dbReference type="GO" id="GO:0005737">
    <property type="term" value="C:cytoplasm"/>
    <property type="evidence" value="ECO:0007669"/>
    <property type="project" value="UniProtKB-SubCell"/>
</dbReference>
<dbReference type="GO" id="GO:0071885">
    <property type="term" value="F:N-terminal protein N-methyltransferase activity"/>
    <property type="evidence" value="ECO:0007669"/>
    <property type="project" value="UniProtKB-UniRule"/>
</dbReference>
<dbReference type="GO" id="GO:0008276">
    <property type="term" value="F:protein methyltransferase activity"/>
    <property type="evidence" value="ECO:0000318"/>
    <property type="project" value="GO_Central"/>
</dbReference>
<dbReference type="GO" id="GO:0016279">
    <property type="term" value="F:protein-lysine N-methyltransferase activity"/>
    <property type="evidence" value="ECO:0007669"/>
    <property type="project" value="UniProtKB-UniRule"/>
</dbReference>
<dbReference type="GO" id="GO:0032259">
    <property type="term" value="P:methylation"/>
    <property type="evidence" value="ECO:0007669"/>
    <property type="project" value="UniProtKB-KW"/>
</dbReference>
<dbReference type="GO" id="GO:0000183">
    <property type="term" value="P:rDNA heterochromatin formation"/>
    <property type="evidence" value="ECO:0007669"/>
    <property type="project" value="EnsemblFungi"/>
</dbReference>
<dbReference type="CDD" id="cd02440">
    <property type="entry name" value="AdoMet_MTases"/>
    <property type="match status" value="1"/>
</dbReference>
<dbReference type="Gene3D" id="3.40.50.150">
    <property type="entry name" value="Vaccinia Virus protein VP39"/>
    <property type="match status" value="1"/>
</dbReference>
<dbReference type="HAMAP" id="MF_03223">
    <property type="entry name" value="Methyltr_EFM7"/>
    <property type="match status" value="1"/>
</dbReference>
<dbReference type="InterPro" id="IPR025784">
    <property type="entry name" value="EFM7"/>
</dbReference>
<dbReference type="InterPro" id="IPR019410">
    <property type="entry name" value="Methyltransf_16"/>
</dbReference>
<dbReference type="InterPro" id="IPR029063">
    <property type="entry name" value="SAM-dependent_MTases_sf"/>
</dbReference>
<dbReference type="PANTHER" id="PTHR14614">
    <property type="entry name" value="HEPATOCELLULAR CARCINOMA-ASSOCIATED ANTIGEN"/>
    <property type="match status" value="1"/>
</dbReference>
<dbReference type="PANTHER" id="PTHR14614:SF10">
    <property type="entry name" value="PROTEIN N-TERMINAL AND LYSINE N-METHYLTRANSFERASE EFM7"/>
    <property type="match status" value="1"/>
</dbReference>
<dbReference type="Pfam" id="PF10294">
    <property type="entry name" value="Methyltransf_16"/>
    <property type="match status" value="1"/>
</dbReference>
<dbReference type="SUPFAM" id="SSF53335">
    <property type="entry name" value="S-adenosyl-L-methionine-dependent methyltransferases"/>
    <property type="match status" value="1"/>
</dbReference>
<dbReference type="PROSITE" id="PS51560">
    <property type="entry name" value="SAM_MT_NNT1"/>
    <property type="match status" value="1"/>
</dbReference>
<keyword id="KW-0963">Cytoplasm</keyword>
<keyword id="KW-0489">Methyltransferase</keyword>
<keyword id="KW-1185">Reference proteome</keyword>
<keyword id="KW-0949">S-adenosyl-L-methionine</keyword>
<keyword id="KW-0808">Transferase</keyword>
<reference key="1">
    <citation type="journal article" date="2005" name="Nature">
        <title>Genomic sequence of the pathogenic and allergenic filamentous fungus Aspergillus fumigatus.</title>
        <authorList>
            <person name="Nierman W.C."/>
            <person name="Pain A."/>
            <person name="Anderson M.J."/>
            <person name="Wortman J.R."/>
            <person name="Kim H.S."/>
            <person name="Arroyo J."/>
            <person name="Berriman M."/>
            <person name="Abe K."/>
            <person name="Archer D.B."/>
            <person name="Bermejo C."/>
            <person name="Bennett J.W."/>
            <person name="Bowyer P."/>
            <person name="Chen D."/>
            <person name="Collins M."/>
            <person name="Coulsen R."/>
            <person name="Davies R."/>
            <person name="Dyer P.S."/>
            <person name="Farman M.L."/>
            <person name="Fedorova N."/>
            <person name="Fedorova N.D."/>
            <person name="Feldblyum T.V."/>
            <person name="Fischer R."/>
            <person name="Fosker N."/>
            <person name="Fraser A."/>
            <person name="Garcia J.L."/>
            <person name="Garcia M.J."/>
            <person name="Goble A."/>
            <person name="Goldman G.H."/>
            <person name="Gomi K."/>
            <person name="Griffith-Jones S."/>
            <person name="Gwilliam R."/>
            <person name="Haas B.J."/>
            <person name="Haas H."/>
            <person name="Harris D.E."/>
            <person name="Horiuchi H."/>
            <person name="Huang J."/>
            <person name="Humphray S."/>
            <person name="Jimenez J."/>
            <person name="Keller N."/>
            <person name="Khouri H."/>
            <person name="Kitamoto K."/>
            <person name="Kobayashi T."/>
            <person name="Konzack S."/>
            <person name="Kulkarni R."/>
            <person name="Kumagai T."/>
            <person name="Lafton A."/>
            <person name="Latge J.-P."/>
            <person name="Li W."/>
            <person name="Lord A."/>
            <person name="Lu C."/>
            <person name="Majoros W.H."/>
            <person name="May G.S."/>
            <person name="Miller B.L."/>
            <person name="Mohamoud Y."/>
            <person name="Molina M."/>
            <person name="Monod M."/>
            <person name="Mouyna I."/>
            <person name="Mulligan S."/>
            <person name="Murphy L.D."/>
            <person name="O'Neil S."/>
            <person name="Paulsen I."/>
            <person name="Penalva M.A."/>
            <person name="Pertea M."/>
            <person name="Price C."/>
            <person name="Pritchard B.L."/>
            <person name="Quail M.A."/>
            <person name="Rabbinowitsch E."/>
            <person name="Rawlins N."/>
            <person name="Rajandream M.A."/>
            <person name="Reichard U."/>
            <person name="Renauld H."/>
            <person name="Robson G.D."/>
            <person name="Rodriguez de Cordoba S."/>
            <person name="Rodriguez-Pena J.M."/>
            <person name="Ronning C.M."/>
            <person name="Rutter S."/>
            <person name="Salzberg S.L."/>
            <person name="Sanchez M."/>
            <person name="Sanchez-Ferrero J.C."/>
            <person name="Saunders D."/>
            <person name="Seeger K."/>
            <person name="Squares R."/>
            <person name="Squares S."/>
            <person name="Takeuchi M."/>
            <person name="Tekaia F."/>
            <person name="Turner G."/>
            <person name="Vazquez de Aldana C.R."/>
            <person name="Weidman J."/>
            <person name="White O."/>
            <person name="Woodward J.R."/>
            <person name="Yu J.-H."/>
            <person name="Fraser C.M."/>
            <person name="Galagan J.E."/>
            <person name="Asai K."/>
            <person name="Machida M."/>
            <person name="Hall N."/>
            <person name="Barrell B.G."/>
            <person name="Denning D.W."/>
        </authorList>
    </citation>
    <scope>NUCLEOTIDE SEQUENCE [LARGE SCALE GENOMIC DNA]</scope>
    <source>
        <strain>ATCC MYA-4609 / CBS 101355 / FGSC A1100 / Af293</strain>
    </source>
</reference>
<accession>Q4WYS7</accession>
<feature type="chain" id="PRO_0000096890" description="Protein N-terminal and lysine N-methyltransferase efm7">
    <location>
        <begin position="1"/>
        <end position="259"/>
    </location>
</feature>
<feature type="binding site" evidence="1">
    <location>
        <position position="56"/>
    </location>
    <ligand>
        <name>S-adenosyl-L-methionine</name>
        <dbReference type="ChEBI" id="CHEBI:59789"/>
    </ligand>
</feature>
<feature type="binding site" evidence="1">
    <location>
        <begin position="83"/>
        <end position="85"/>
    </location>
    <ligand>
        <name>S-adenosyl-L-methionine</name>
        <dbReference type="ChEBI" id="CHEBI:59789"/>
    </ligand>
</feature>
<feature type="binding site" evidence="1">
    <location>
        <position position="105"/>
    </location>
    <ligand>
        <name>S-adenosyl-L-methionine</name>
        <dbReference type="ChEBI" id="CHEBI:59789"/>
    </ligand>
</feature>
<feature type="binding site" evidence="1">
    <location>
        <position position="139"/>
    </location>
    <ligand>
        <name>S-adenosyl-L-methionine</name>
        <dbReference type="ChEBI" id="CHEBI:59789"/>
    </ligand>
</feature>
<feature type="binding site" evidence="1">
    <location>
        <position position="163"/>
    </location>
    <ligand>
        <name>S-adenosyl-L-methionine</name>
        <dbReference type="ChEBI" id="CHEBI:59789"/>
    </ligand>
</feature>
<name>EFM7_ASPFU</name>
<gene>
    <name evidence="1" type="primary">efm7</name>
    <name type="synonym">nnt1</name>
    <name type="ORF">AFUA_3G14110</name>
</gene>
<protein>
    <recommendedName>
        <fullName evidence="1">Protein N-terminal and lysine N-methyltransferase efm7</fullName>
        <ecNumber evidence="1">2.1.1.-</ecNumber>
    </recommendedName>
    <alternativeName>
        <fullName evidence="1">Elongation factor methyltransferase 7</fullName>
    </alternativeName>
</protein>
<sequence length="259" mass="28843">MANEEDFVGFGDTFKDPEGFYPPEKEPTFAEHQMLSGQTVRVRLVGSHPLYGDLLWNAGRTSATYIEEKASSLVEGKDVLEVGAAAGVPSIVSAVKGARTVVMTDYPDPDLVENMRYNASLSAAIIPSSSSLHVAGYKWGDPVEPLTAYLPEGSNSFDLLIMADVVYSYQEHPNLIKVMQKALKKSKDSVALVVFTPYQPWLLPRNQTFFPLAEQNGFQVTKIFEKVMDKVLFENDPGDELLRRTVFGYEIRWAPNQLN</sequence>
<organism>
    <name type="scientific">Aspergillus fumigatus (strain ATCC MYA-4609 / CBS 101355 / FGSC A1100 / Af293)</name>
    <name type="common">Neosartorya fumigata</name>
    <dbReference type="NCBI Taxonomy" id="330879"/>
    <lineage>
        <taxon>Eukaryota</taxon>
        <taxon>Fungi</taxon>
        <taxon>Dikarya</taxon>
        <taxon>Ascomycota</taxon>
        <taxon>Pezizomycotina</taxon>
        <taxon>Eurotiomycetes</taxon>
        <taxon>Eurotiomycetidae</taxon>
        <taxon>Eurotiales</taxon>
        <taxon>Aspergillaceae</taxon>
        <taxon>Aspergillus</taxon>
        <taxon>Aspergillus subgen. Fumigati</taxon>
    </lineage>
</organism>
<proteinExistence type="inferred from homology"/>
<evidence type="ECO:0000255" key="1">
    <source>
        <dbReference type="HAMAP-Rule" id="MF_03223"/>
    </source>
</evidence>
<comment type="function">
    <text evidence="1">S-adenosyl-L-methionine-dependent protein methyltransferase that trimethylates the N-terminal glycine 'Gly-2' of elongation factor 1-alpha, before also catalyzing the mono- and dimethylation of 'Lys-3'.</text>
</comment>
<comment type="subcellular location">
    <subcellularLocation>
        <location evidence="1">Cytoplasm</location>
    </subcellularLocation>
</comment>
<comment type="similarity">
    <text evidence="1">Belongs to the class I-like SAM-binding methyltransferase superfamily. EFM7 family.</text>
</comment>